<feature type="chain" id="PRO_0000278491" description="Meiotically up-regulated gene 28 protein">
    <location>
        <begin position="1"/>
        <end position="609"/>
    </location>
</feature>
<feature type="domain" description="RRM 1" evidence="1">
    <location>
        <begin position="20"/>
        <end position="103"/>
    </location>
</feature>
<feature type="domain" description="RRM 2" evidence="1">
    <location>
        <begin position="419"/>
        <end position="499"/>
    </location>
</feature>
<gene>
    <name type="primary">mug28</name>
    <name type="ORF">SPAC343.07</name>
</gene>
<evidence type="ECO:0000255" key="1">
    <source>
        <dbReference type="PROSITE-ProRule" id="PRU00176"/>
    </source>
</evidence>
<evidence type="ECO:0000269" key="2">
    <source>
    </source>
</evidence>
<evidence type="ECO:0000269" key="3">
    <source>
    </source>
</evidence>
<comment type="function">
    <text evidence="2">Has a role in sporulation.</text>
</comment>
<comment type="subcellular location">
    <subcellularLocation>
        <location evidence="3">Cytoplasm</location>
    </subcellularLocation>
</comment>
<name>MUG28_SCHPO</name>
<organism>
    <name type="scientific">Schizosaccharomyces pombe (strain 972 / ATCC 24843)</name>
    <name type="common">Fission yeast</name>
    <dbReference type="NCBI Taxonomy" id="284812"/>
    <lineage>
        <taxon>Eukaryota</taxon>
        <taxon>Fungi</taxon>
        <taxon>Dikarya</taxon>
        <taxon>Ascomycota</taxon>
        <taxon>Taphrinomycotina</taxon>
        <taxon>Schizosaccharomycetes</taxon>
        <taxon>Schizosaccharomycetales</taxon>
        <taxon>Schizosaccharomycetaceae</taxon>
        <taxon>Schizosaccharomyces</taxon>
    </lineage>
</organism>
<sequence>MIALEKLSEKNKRSTKKCEISIYVGNLPSTCQSSDLHELFEPFGNFSKFHMLSRKKNKSTDSKSPTLFAFITFENKCSADNAIASLNGSSFQGNTLKVEYTHIVERYKNKLENGVDQIHHSNNEKAKIRFSKIEKYTKETRPTVSEVRVSTKDKKEYSMNTSNLVQSNPPKVHDKENAFAEATGTSILSSKAVQTLLVSDFTENEPKHLSIRPNCKDNNTPSISNTFIEPYKENNTEHLHLKSAFEPCQMMPGMLLEQNPQFLYDNPSIFVIGILNLPLKVSPVELYNEFSNHGHILGVAINQSINEDMTHYAEVAVSTYESCIEIIEKFHAIAYEGSILQLFIKQPVQGFCSNLLNHPEGTMTNLLPPNMEMPQPFEIPVIAKTSALPNPFISFPSFQTSYETTVTPTPTSTPTIDPCNLFVKNLDDNIVGNTQQLEELFSKFGRIKSCTLASYPSTEISKGYGFVSFSHPFEAVQAINTLNGVLFGKKRLFVNYAEKREDRKKRLSAIFSQSYPPVVPSPSLTIPMATEPQILEYHQEWPQPLIQSIQQHGYSDPRQTLPTRLDSCAAKLREAVISNENLNPSHKFGIKHSTFKTSLSPLTNIVLNQ</sequence>
<proteinExistence type="evidence at protein level"/>
<protein>
    <recommendedName>
        <fullName>Meiotically up-regulated gene 28 protein</fullName>
    </recommendedName>
</protein>
<accession>Q9UT83</accession>
<keyword id="KW-0963">Cytoplasm</keyword>
<keyword id="KW-0469">Meiosis</keyword>
<keyword id="KW-1185">Reference proteome</keyword>
<keyword id="KW-0677">Repeat</keyword>
<keyword id="KW-0694">RNA-binding</keyword>
<keyword id="KW-0749">Sporulation</keyword>
<dbReference type="EMBL" id="CU329670">
    <property type="protein sequence ID" value="CAB52270.1"/>
    <property type="molecule type" value="Genomic_DNA"/>
</dbReference>
<dbReference type="PIR" id="T38656">
    <property type="entry name" value="T38656"/>
</dbReference>
<dbReference type="RefSeq" id="NP_593427.1">
    <property type="nucleotide sequence ID" value="NM_001018860.1"/>
</dbReference>
<dbReference type="BioGRID" id="279596">
    <property type="interactions" value="15"/>
</dbReference>
<dbReference type="STRING" id="284812.Q9UT83"/>
<dbReference type="PaxDb" id="4896-SPAC343.07.1"/>
<dbReference type="EnsemblFungi" id="SPAC343.07.1">
    <property type="protein sequence ID" value="SPAC343.07.1:pep"/>
    <property type="gene ID" value="SPAC343.07"/>
</dbReference>
<dbReference type="GeneID" id="2543165"/>
<dbReference type="KEGG" id="spo:2543165"/>
<dbReference type="PomBase" id="SPAC343.07">
    <property type="gene designation" value="mug28"/>
</dbReference>
<dbReference type="VEuPathDB" id="FungiDB:SPAC343.07"/>
<dbReference type="eggNOG" id="KOG0118">
    <property type="taxonomic scope" value="Eukaryota"/>
</dbReference>
<dbReference type="HOGENOM" id="CLU_463928_0_0_1"/>
<dbReference type="InParanoid" id="Q9UT83"/>
<dbReference type="OMA" id="HPSEAMQ"/>
<dbReference type="PhylomeDB" id="Q9UT83"/>
<dbReference type="PRO" id="PR:Q9UT83"/>
<dbReference type="Proteomes" id="UP000002485">
    <property type="component" value="Chromosome I"/>
</dbReference>
<dbReference type="GO" id="GO:0005737">
    <property type="term" value="C:cytoplasm"/>
    <property type="evidence" value="ECO:0000314"/>
    <property type="project" value="PomBase"/>
</dbReference>
<dbReference type="GO" id="GO:0005634">
    <property type="term" value="C:nucleus"/>
    <property type="evidence" value="ECO:0000314"/>
    <property type="project" value="PomBase"/>
</dbReference>
<dbReference type="GO" id="GO:0005628">
    <property type="term" value="C:prospore membrane"/>
    <property type="evidence" value="ECO:0000314"/>
    <property type="project" value="PomBase"/>
</dbReference>
<dbReference type="GO" id="GO:0003723">
    <property type="term" value="F:RNA binding"/>
    <property type="evidence" value="ECO:0000255"/>
    <property type="project" value="PomBase"/>
</dbReference>
<dbReference type="GO" id="GO:0051321">
    <property type="term" value="P:meiotic cell cycle"/>
    <property type="evidence" value="ECO:0007669"/>
    <property type="project" value="UniProtKB-KW"/>
</dbReference>
<dbReference type="GO" id="GO:0030435">
    <property type="term" value="P:sporulation resulting in formation of a cellular spore"/>
    <property type="evidence" value="ECO:0007669"/>
    <property type="project" value="UniProtKB-KW"/>
</dbReference>
<dbReference type="CDD" id="cd21620">
    <property type="entry name" value="RRM1_Mug28"/>
    <property type="match status" value="1"/>
</dbReference>
<dbReference type="CDD" id="cd21621">
    <property type="entry name" value="RRM2_Crp79_Mug28"/>
    <property type="match status" value="1"/>
</dbReference>
<dbReference type="CDD" id="cd21622">
    <property type="entry name" value="RRM3_Crp79_Mug28"/>
    <property type="match status" value="1"/>
</dbReference>
<dbReference type="Gene3D" id="3.30.70.330">
    <property type="match status" value="2"/>
</dbReference>
<dbReference type="InterPro" id="IPR050502">
    <property type="entry name" value="Euk_RNA-bind_prot"/>
</dbReference>
<dbReference type="InterPro" id="IPR012677">
    <property type="entry name" value="Nucleotide-bd_a/b_plait_sf"/>
</dbReference>
<dbReference type="InterPro" id="IPR035979">
    <property type="entry name" value="RBD_domain_sf"/>
</dbReference>
<dbReference type="InterPro" id="IPR000504">
    <property type="entry name" value="RRM_dom"/>
</dbReference>
<dbReference type="PANTHER" id="PTHR48025">
    <property type="entry name" value="OS02G0815200 PROTEIN"/>
    <property type="match status" value="1"/>
</dbReference>
<dbReference type="PANTHER" id="PTHR48025:SF1">
    <property type="entry name" value="RRM DOMAIN-CONTAINING PROTEIN"/>
    <property type="match status" value="1"/>
</dbReference>
<dbReference type="Pfam" id="PF00076">
    <property type="entry name" value="RRM_1"/>
    <property type="match status" value="2"/>
</dbReference>
<dbReference type="SMART" id="SM00360">
    <property type="entry name" value="RRM"/>
    <property type="match status" value="3"/>
</dbReference>
<dbReference type="SUPFAM" id="SSF54928">
    <property type="entry name" value="RNA-binding domain, RBD"/>
    <property type="match status" value="2"/>
</dbReference>
<dbReference type="PROSITE" id="PS50102">
    <property type="entry name" value="RRM"/>
    <property type="match status" value="2"/>
</dbReference>
<reference key="1">
    <citation type="journal article" date="2002" name="Nature">
        <title>The genome sequence of Schizosaccharomyces pombe.</title>
        <authorList>
            <person name="Wood V."/>
            <person name="Gwilliam R."/>
            <person name="Rajandream M.A."/>
            <person name="Lyne M.H."/>
            <person name="Lyne R."/>
            <person name="Stewart A."/>
            <person name="Sgouros J.G."/>
            <person name="Peat N."/>
            <person name="Hayles J."/>
            <person name="Baker S.G."/>
            <person name="Basham D."/>
            <person name="Bowman S."/>
            <person name="Brooks K."/>
            <person name="Brown D."/>
            <person name="Brown S."/>
            <person name="Chillingworth T."/>
            <person name="Churcher C.M."/>
            <person name="Collins M."/>
            <person name="Connor R."/>
            <person name="Cronin A."/>
            <person name="Davis P."/>
            <person name="Feltwell T."/>
            <person name="Fraser A."/>
            <person name="Gentles S."/>
            <person name="Goble A."/>
            <person name="Hamlin N."/>
            <person name="Harris D.E."/>
            <person name="Hidalgo J."/>
            <person name="Hodgson G."/>
            <person name="Holroyd S."/>
            <person name="Hornsby T."/>
            <person name="Howarth S."/>
            <person name="Huckle E.J."/>
            <person name="Hunt S."/>
            <person name="Jagels K."/>
            <person name="James K.D."/>
            <person name="Jones L."/>
            <person name="Jones M."/>
            <person name="Leather S."/>
            <person name="McDonald S."/>
            <person name="McLean J."/>
            <person name="Mooney P."/>
            <person name="Moule S."/>
            <person name="Mungall K.L."/>
            <person name="Murphy L.D."/>
            <person name="Niblett D."/>
            <person name="Odell C."/>
            <person name="Oliver K."/>
            <person name="O'Neil S."/>
            <person name="Pearson D."/>
            <person name="Quail M.A."/>
            <person name="Rabbinowitsch E."/>
            <person name="Rutherford K.M."/>
            <person name="Rutter S."/>
            <person name="Saunders D."/>
            <person name="Seeger K."/>
            <person name="Sharp S."/>
            <person name="Skelton J."/>
            <person name="Simmonds M.N."/>
            <person name="Squares R."/>
            <person name="Squares S."/>
            <person name="Stevens K."/>
            <person name="Taylor K."/>
            <person name="Taylor R.G."/>
            <person name="Tivey A."/>
            <person name="Walsh S.V."/>
            <person name="Warren T."/>
            <person name="Whitehead S."/>
            <person name="Woodward J.R."/>
            <person name="Volckaert G."/>
            <person name="Aert R."/>
            <person name="Robben J."/>
            <person name="Grymonprez B."/>
            <person name="Weltjens I."/>
            <person name="Vanstreels E."/>
            <person name="Rieger M."/>
            <person name="Schaefer M."/>
            <person name="Mueller-Auer S."/>
            <person name="Gabel C."/>
            <person name="Fuchs M."/>
            <person name="Duesterhoeft A."/>
            <person name="Fritzc C."/>
            <person name="Holzer E."/>
            <person name="Moestl D."/>
            <person name="Hilbert H."/>
            <person name="Borzym K."/>
            <person name="Langer I."/>
            <person name="Beck A."/>
            <person name="Lehrach H."/>
            <person name="Reinhardt R."/>
            <person name="Pohl T.M."/>
            <person name="Eger P."/>
            <person name="Zimmermann W."/>
            <person name="Wedler H."/>
            <person name="Wambutt R."/>
            <person name="Purnelle B."/>
            <person name="Goffeau A."/>
            <person name="Cadieu E."/>
            <person name="Dreano S."/>
            <person name="Gloux S."/>
            <person name="Lelaure V."/>
            <person name="Mottier S."/>
            <person name="Galibert F."/>
            <person name="Aves S.J."/>
            <person name="Xiang Z."/>
            <person name="Hunt C."/>
            <person name="Moore K."/>
            <person name="Hurst S.M."/>
            <person name="Lucas M."/>
            <person name="Rochet M."/>
            <person name="Gaillardin C."/>
            <person name="Tallada V.A."/>
            <person name="Garzon A."/>
            <person name="Thode G."/>
            <person name="Daga R.R."/>
            <person name="Cruzado L."/>
            <person name="Jimenez J."/>
            <person name="Sanchez M."/>
            <person name="del Rey F."/>
            <person name="Benito J."/>
            <person name="Dominguez A."/>
            <person name="Revuelta J.L."/>
            <person name="Moreno S."/>
            <person name="Armstrong J."/>
            <person name="Forsburg S.L."/>
            <person name="Cerutti L."/>
            <person name="Lowe T."/>
            <person name="McCombie W.R."/>
            <person name="Paulsen I."/>
            <person name="Potashkin J."/>
            <person name="Shpakovski G.V."/>
            <person name="Ussery D."/>
            <person name="Barrell B.G."/>
            <person name="Nurse P."/>
        </authorList>
    </citation>
    <scope>NUCLEOTIDE SEQUENCE [LARGE SCALE GENOMIC DNA]</scope>
    <source>
        <strain>972 / ATCC 24843</strain>
    </source>
</reference>
<reference key="2">
    <citation type="journal article" date="2005" name="Curr. Biol.">
        <title>A large-scale screen in S. pombe identifies seven novel genes required for critical meiotic events.</title>
        <authorList>
            <person name="Martin-Castellanos C."/>
            <person name="Blanco M."/>
            <person name="Rozalen A.E."/>
            <person name="Perez-Hidalgo L."/>
            <person name="Garcia A.I."/>
            <person name="Conde F."/>
            <person name="Mata J."/>
            <person name="Ellermeier C."/>
            <person name="Davis L."/>
            <person name="San-Segundo P."/>
            <person name="Smith G.R."/>
            <person name="Moreno S."/>
        </authorList>
    </citation>
    <scope>FUNCTION IN SPORULATION</scope>
</reference>
<reference key="3">
    <citation type="journal article" date="2006" name="Nat. Biotechnol.">
        <title>ORFeome cloning and global analysis of protein localization in the fission yeast Schizosaccharomyces pombe.</title>
        <authorList>
            <person name="Matsuyama A."/>
            <person name="Arai R."/>
            <person name="Yashiroda Y."/>
            <person name="Shirai A."/>
            <person name="Kamata A."/>
            <person name="Sekido S."/>
            <person name="Kobayashi Y."/>
            <person name="Hashimoto A."/>
            <person name="Hamamoto M."/>
            <person name="Hiraoka Y."/>
            <person name="Horinouchi S."/>
            <person name="Yoshida M."/>
        </authorList>
    </citation>
    <scope>SUBCELLULAR LOCATION [LARGE SCALE ANALYSIS]</scope>
</reference>